<feature type="chain" id="PRO_0000164731" description="Gene 21 protein">
    <location>
        <begin position="1"/>
        <end position="111"/>
    </location>
</feature>
<dbReference type="EMBL" id="Z18946">
    <property type="protein sequence ID" value="CAA79397.1"/>
    <property type="molecule type" value="Genomic_DNA"/>
</dbReference>
<dbReference type="PIR" id="S30966">
    <property type="entry name" value="S30966"/>
</dbReference>
<dbReference type="RefSeq" id="NP_039685.1">
    <property type="nucleotide sequence ID" value="NC_001335.1"/>
</dbReference>
<dbReference type="SMR" id="Q05227"/>
<dbReference type="GeneID" id="2942925"/>
<dbReference type="KEGG" id="vg:2942925"/>
<dbReference type="OrthoDB" id="14428at10239"/>
<dbReference type="Proteomes" id="UP000002123">
    <property type="component" value="Genome"/>
</dbReference>
<dbReference type="InterPro" id="IPR039452">
    <property type="entry name" value="DUF5403"/>
</dbReference>
<dbReference type="Pfam" id="PF17395">
    <property type="entry name" value="DUF5403"/>
    <property type="match status" value="1"/>
</dbReference>
<organismHost>
    <name type="scientific">Mycobacterium</name>
    <dbReference type="NCBI Taxonomy" id="1763"/>
</organismHost>
<accession>Q05227</accession>
<sequence>MAKVYANANKVAARYVETRDAVRDERNKVTRRAKANLARQNSTTRITDEGYFPATITEQDGDVDFHTILNAPNALALEFGHAPSGFFAGTDTKPPEATYILTRAAIGGTVS</sequence>
<gene>
    <name type="primary">21</name>
</gene>
<protein>
    <recommendedName>
        <fullName>Gene 21 protein</fullName>
    </recommendedName>
    <alternativeName>
        <fullName>Gp21</fullName>
    </alternativeName>
</protein>
<proteinExistence type="predicted"/>
<name>VG21_BPML5</name>
<keyword id="KW-1185">Reference proteome</keyword>
<organism>
    <name type="scientific">Mycobacterium phage L5</name>
    <name type="common">Mycobacteriophage L5</name>
    <dbReference type="NCBI Taxonomy" id="31757"/>
    <lineage>
        <taxon>Viruses</taxon>
        <taxon>Duplodnaviria</taxon>
        <taxon>Heunggongvirae</taxon>
        <taxon>Uroviricota</taxon>
        <taxon>Caudoviricetes</taxon>
        <taxon>Fromanvirus</taxon>
    </lineage>
</organism>
<reference key="1">
    <citation type="journal article" date="1993" name="Mol. Microbiol.">
        <title>DNA sequence, structure and gene expression of mycobacteriophage L5: a phage system for mycobacterial genetics.</title>
        <authorList>
            <person name="Hatfull G.F."/>
            <person name="Sarkis G.J."/>
        </authorList>
    </citation>
    <scope>NUCLEOTIDE SEQUENCE [LARGE SCALE GENOMIC DNA]</scope>
</reference>